<proteinExistence type="predicted"/>
<organism>
    <name type="scientific">Haemophilus influenzae (strain ATCC 51907 / DSM 11121 / KW20 / Rd)</name>
    <dbReference type="NCBI Taxonomy" id="71421"/>
    <lineage>
        <taxon>Bacteria</taxon>
        <taxon>Pseudomonadati</taxon>
        <taxon>Pseudomonadota</taxon>
        <taxon>Gammaproteobacteria</taxon>
        <taxon>Pasteurellales</taxon>
        <taxon>Pasteurellaceae</taxon>
        <taxon>Haemophilus</taxon>
    </lineage>
</organism>
<reference key="1">
    <citation type="journal article" date="1995" name="Science">
        <title>Whole-genome random sequencing and assembly of Haemophilus influenzae Rd.</title>
        <authorList>
            <person name="Fleischmann R.D."/>
            <person name="Adams M.D."/>
            <person name="White O."/>
            <person name="Clayton R.A."/>
            <person name="Kirkness E.F."/>
            <person name="Kerlavage A.R."/>
            <person name="Bult C.J."/>
            <person name="Tomb J.-F."/>
            <person name="Dougherty B.A."/>
            <person name="Merrick J.M."/>
            <person name="McKenney K."/>
            <person name="Sutton G.G."/>
            <person name="FitzHugh W."/>
            <person name="Fields C.A."/>
            <person name="Gocayne J.D."/>
            <person name="Scott J.D."/>
            <person name="Shirley R."/>
            <person name="Liu L.-I."/>
            <person name="Glodek A."/>
            <person name="Kelley J.M."/>
            <person name="Weidman J.F."/>
            <person name="Phillips C.A."/>
            <person name="Spriggs T."/>
            <person name="Hedblom E."/>
            <person name="Cotton M.D."/>
            <person name="Utterback T.R."/>
            <person name="Hanna M.C."/>
            <person name="Nguyen D.T."/>
            <person name="Saudek D.M."/>
            <person name="Brandon R.C."/>
            <person name="Fine L.D."/>
            <person name="Fritchman J.L."/>
            <person name="Fuhrmann J.L."/>
            <person name="Geoghagen N.S.M."/>
            <person name="Gnehm C.L."/>
            <person name="McDonald L.A."/>
            <person name="Small K.V."/>
            <person name="Fraser C.M."/>
            <person name="Smith H.O."/>
            <person name="Venter J.C."/>
        </authorList>
    </citation>
    <scope>NUCLEOTIDE SEQUENCE [LARGE SCALE GENOMIC DNA]</scope>
    <source>
        <strain>ATCC 51907 / DSM 11121 / KW20 / Rd</strain>
    </source>
</reference>
<gene>
    <name type="ordered locus">HI_0379</name>
</gene>
<dbReference type="EMBL" id="L42023">
    <property type="protein sequence ID" value="AAC22037.1"/>
    <property type="molecule type" value="Genomic_DNA"/>
</dbReference>
<dbReference type="PIR" id="F64150">
    <property type="entry name" value="F64150"/>
</dbReference>
<dbReference type="RefSeq" id="NP_438540.1">
    <property type="nucleotide sequence ID" value="NC_000907.1"/>
</dbReference>
<dbReference type="SMR" id="P44675"/>
<dbReference type="STRING" id="71421.HI_0379"/>
<dbReference type="EnsemblBacteria" id="AAC22037">
    <property type="protein sequence ID" value="AAC22037"/>
    <property type="gene ID" value="HI_0379"/>
</dbReference>
<dbReference type="KEGG" id="hin:HI_0379"/>
<dbReference type="PATRIC" id="fig|71421.8.peg.397"/>
<dbReference type="eggNOG" id="COG1959">
    <property type="taxonomic scope" value="Bacteria"/>
</dbReference>
<dbReference type="HOGENOM" id="CLU_107144_0_0_6"/>
<dbReference type="OrthoDB" id="9808360at2"/>
<dbReference type="PhylomeDB" id="P44675"/>
<dbReference type="BioCyc" id="HINF71421:G1GJ1-392-MONOMER"/>
<dbReference type="Proteomes" id="UP000000579">
    <property type="component" value="Chromosome"/>
</dbReference>
<dbReference type="GO" id="GO:0005829">
    <property type="term" value="C:cytosol"/>
    <property type="evidence" value="ECO:0000318"/>
    <property type="project" value="GO_Central"/>
</dbReference>
<dbReference type="GO" id="GO:0003700">
    <property type="term" value="F:DNA-binding transcription factor activity"/>
    <property type="evidence" value="ECO:0000318"/>
    <property type="project" value="GO_Central"/>
</dbReference>
<dbReference type="GO" id="GO:0003690">
    <property type="term" value="F:double-stranded DNA binding"/>
    <property type="evidence" value="ECO:0007669"/>
    <property type="project" value="InterPro"/>
</dbReference>
<dbReference type="GO" id="GO:0006355">
    <property type="term" value="P:regulation of DNA-templated transcription"/>
    <property type="evidence" value="ECO:0000318"/>
    <property type="project" value="GO_Central"/>
</dbReference>
<dbReference type="FunFam" id="1.10.10.10:FF:000026">
    <property type="entry name" value="HTH-type transcriptional regulator IscR"/>
    <property type="match status" value="1"/>
</dbReference>
<dbReference type="Gene3D" id="1.10.10.10">
    <property type="entry name" value="Winged helix-like DNA-binding domain superfamily/Winged helix DNA-binding domain"/>
    <property type="match status" value="1"/>
</dbReference>
<dbReference type="InterPro" id="IPR010242">
    <property type="entry name" value="TF_HTH_IscR"/>
</dbReference>
<dbReference type="InterPro" id="IPR030489">
    <property type="entry name" value="TR_Rrf2-type_CS"/>
</dbReference>
<dbReference type="InterPro" id="IPR000944">
    <property type="entry name" value="Tscrpt_reg_Rrf2"/>
</dbReference>
<dbReference type="InterPro" id="IPR036388">
    <property type="entry name" value="WH-like_DNA-bd_sf"/>
</dbReference>
<dbReference type="InterPro" id="IPR036390">
    <property type="entry name" value="WH_DNA-bd_sf"/>
</dbReference>
<dbReference type="NCBIfam" id="TIGR02010">
    <property type="entry name" value="IscR"/>
    <property type="match status" value="1"/>
</dbReference>
<dbReference type="NCBIfam" id="TIGR00738">
    <property type="entry name" value="rrf2_super"/>
    <property type="match status" value="1"/>
</dbReference>
<dbReference type="PANTHER" id="PTHR33221:SF5">
    <property type="entry name" value="HTH-TYPE TRANSCRIPTIONAL REGULATOR ISCR"/>
    <property type="match status" value="1"/>
</dbReference>
<dbReference type="PANTHER" id="PTHR33221">
    <property type="entry name" value="WINGED HELIX-TURN-HELIX TRANSCRIPTIONAL REGULATOR, RRF2 FAMILY"/>
    <property type="match status" value="1"/>
</dbReference>
<dbReference type="Pfam" id="PF02082">
    <property type="entry name" value="Rrf2"/>
    <property type="match status" value="1"/>
</dbReference>
<dbReference type="SUPFAM" id="SSF46785">
    <property type="entry name" value="Winged helix' DNA-binding domain"/>
    <property type="match status" value="1"/>
</dbReference>
<dbReference type="PROSITE" id="PS01332">
    <property type="entry name" value="HTH_RRF2_1"/>
    <property type="match status" value="1"/>
</dbReference>
<dbReference type="PROSITE" id="PS51197">
    <property type="entry name" value="HTH_RRF2_2"/>
    <property type="match status" value="1"/>
</dbReference>
<sequence>MKLTSKGRYAVTAVLDIALNADGGPVSLADISERQHISLSYLEQLFAKLRKDGLVKSVRGPGGGYQLGLPSEQISVGMIIAAVNENIHVTKCLGRENCKNGVECLTHELWEDLSLRIESFLNEITLAELVNKRNVKRQSHRDFNNLLVNQ</sequence>
<protein>
    <recommendedName>
        <fullName>Putative HTH-type transcriptional regulator HI_0379</fullName>
    </recommendedName>
</protein>
<keyword id="KW-0238">DNA-binding</keyword>
<keyword id="KW-1185">Reference proteome</keyword>
<feature type="chain" id="PRO_0000109564" description="Putative HTH-type transcriptional regulator HI_0379">
    <location>
        <begin position="1"/>
        <end position="150"/>
    </location>
</feature>
<feature type="domain" description="HTH rrf2-type" evidence="1">
    <location>
        <begin position="2"/>
        <end position="131"/>
    </location>
</feature>
<name>Y379_HAEIN</name>
<evidence type="ECO:0000255" key="1">
    <source>
        <dbReference type="PROSITE-ProRule" id="PRU00540"/>
    </source>
</evidence>
<accession>P44675</accession>